<protein>
    <recommendedName>
        <fullName evidence="1">Trigger factor</fullName>
        <shortName evidence="1">TF</shortName>
        <ecNumber evidence="1">5.2.1.8</ecNumber>
    </recommendedName>
    <alternativeName>
        <fullName evidence="1">PPIase</fullName>
    </alternativeName>
</protein>
<keyword id="KW-0131">Cell cycle</keyword>
<keyword id="KW-0132">Cell division</keyword>
<keyword id="KW-0143">Chaperone</keyword>
<keyword id="KW-0963">Cytoplasm</keyword>
<keyword id="KW-0413">Isomerase</keyword>
<keyword id="KW-0697">Rotamase</keyword>
<gene>
    <name evidence="1" type="primary">tig</name>
    <name type="ordered locus">NATL1_21241</name>
</gene>
<feature type="chain" id="PRO_1000022727" description="Trigger factor">
    <location>
        <begin position="1"/>
        <end position="472"/>
    </location>
</feature>
<feature type="domain" description="PPIase FKBP-type" evidence="1">
    <location>
        <begin position="174"/>
        <end position="261"/>
    </location>
</feature>
<feature type="region of interest" description="Disordered" evidence="2">
    <location>
        <begin position="433"/>
        <end position="472"/>
    </location>
</feature>
<feature type="compositionally biased region" description="Basic and acidic residues" evidence="2">
    <location>
        <begin position="439"/>
        <end position="451"/>
    </location>
</feature>
<accession>A2C5C0</accession>
<organism>
    <name type="scientific">Prochlorococcus marinus (strain NATL1A)</name>
    <dbReference type="NCBI Taxonomy" id="167555"/>
    <lineage>
        <taxon>Bacteria</taxon>
        <taxon>Bacillati</taxon>
        <taxon>Cyanobacteriota</taxon>
        <taxon>Cyanophyceae</taxon>
        <taxon>Synechococcales</taxon>
        <taxon>Prochlorococcaceae</taxon>
        <taxon>Prochlorococcus</taxon>
    </lineage>
</organism>
<evidence type="ECO:0000255" key="1">
    <source>
        <dbReference type="HAMAP-Rule" id="MF_00303"/>
    </source>
</evidence>
<evidence type="ECO:0000256" key="2">
    <source>
        <dbReference type="SAM" id="MobiDB-lite"/>
    </source>
</evidence>
<sequence>MSAAKLNVKTSSKPNSRIAVEVEVPANRCKNSYDEALSKLSRSISIPGFRKGKVPKTVVIQQLGVKRIQASALESLLQKVWTETLDQEGIEPLCEPELEDGFETILENFNPEKTLILKLETDITPIPTLKKSSGLTAEVENLIFDPKKVDELIEQSRAQLATKVPVTDRAAQKGDIALVSFKGSFSDDGSEIEGGSADSIEIELEQGRMIPGFIEGVIGMNINDEKILKCEFPKDYHQEEAKGRKAEFNVSLEDLKIKELPELNDEFAKQASDKENMSDLRADLEKRLKEDNDRKQAKTRQDSLLDVLVKELEVDIPKSLIDQEVRIIVEQTAQNFAQQGIDVKSMFTPELVKSLMESSKGEAEKKLRQKFALKALAKSEKIEVSDKEINSKLEQVEADIKLSNEKNIDAKRLKEAITDDLLQEKLFAWLEENNTVVEKPPEKARDQIKEKSSKKKTTKTNKEKKSSKTPKS</sequence>
<name>TIG_PROM1</name>
<comment type="function">
    <text evidence="1">Involved in protein export. Acts as a chaperone by maintaining the newly synthesized protein in an open conformation. Functions as a peptidyl-prolyl cis-trans isomerase.</text>
</comment>
<comment type="catalytic activity">
    <reaction evidence="1">
        <text>[protein]-peptidylproline (omega=180) = [protein]-peptidylproline (omega=0)</text>
        <dbReference type="Rhea" id="RHEA:16237"/>
        <dbReference type="Rhea" id="RHEA-COMP:10747"/>
        <dbReference type="Rhea" id="RHEA-COMP:10748"/>
        <dbReference type="ChEBI" id="CHEBI:83833"/>
        <dbReference type="ChEBI" id="CHEBI:83834"/>
        <dbReference type="EC" id="5.2.1.8"/>
    </reaction>
</comment>
<comment type="subcellular location">
    <subcellularLocation>
        <location>Cytoplasm</location>
    </subcellularLocation>
    <text evidence="1">About half TF is bound to the ribosome near the polypeptide exit tunnel while the other half is free in the cytoplasm.</text>
</comment>
<comment type="domain">
    <text evidence="1">Consists of 3 domains; the N-terminus binds the ribosome, the middle domain has PPIase activity, while the C-terminus has intrinsic chaperone activity on its own.</text>
</comment>
<comment type="similarity">
    <text evidence="1">Belongs to the FKBP-type PPIase family. Tig subfamily.</text>
</comment>
<reference key="1">
    <citation type="journal article" date="2007" name="PLoS Genet.">
        <title>Patterns and implications of gene gain and loss in the evolution of Prochlorococcus.</title>
        <authorList>
            <person name="Kettler G.C."/>
            <person name="Martiny A.C."/>
            <person name="Huang K."/>
            <person name="Zucker J."/>
            <person name="Coleman M.L."/>
            <person name="Rodrigue S."/>
            <person name="Chen F."/>
            <person name="Lapidus A."/>
            <person name="Ferriera S."/>
            <person name="Johnson J."/>
            <person name="Steglich C."/>
            <person name="Church G.M."/>
            <person name="Richardson P."/>
            <person name="Chisholm S.W."/>
        </authorList>
    </citation>
    <scope>NUCLEOTIDE SEQUENCE [LARGE SCALE GENOMIC DNA]</scope>
    <source>
        <strain>NATL1A</strain>
    </source>
</reference>
<proteinExistence type="inferred from homology"/>
<dbReference type="EC" id="5.2.1.8" evidence="1"/>
<dbReference type="EMBL" id="CP000553">
    <property type="protein sequence ID" value="ABM76680.1"/>
    <property type="molecule type" value="Genomic_DNA"/>
</dbReference>
<dbReference type="RefSeq" id="WP_011824623.1">
    <property type="nucleotide sequence ID" value="NC_008819.1"/>
</dbReference>
<dbReference type="SMR" id="A2C5C0"/>
<dbReference type="KEGG" id="pme:NATL1_21241"/>
<dbReference type="eggNOG" id="COG0544">
    <property type="taxonomic scope" value="Bacteria"/>
</dbReference>
<dbReference type="HOGENOM" id="CLU_033058_3_1_3"/>
<dbReference type="Proteomes" id="UP000002592">
    <property type="component" value="Chromosome"/>
</dbReference>
<dbReference type="GO" id="GO:0005737">
    <property type="term" value="C:cytoplasm"/>
    <property type="evidence" value="ECO:0007669"/>
    <property type="project" value="UniProtKB-SubCell"/>
</dbReference>
<dbReference type="GO" id="GO:0003755">
    <property type="term" value="F:peptidyl-prolyl cis-trans isomerase activity"/>
    <property type="evidence" value="ECO:0007669"/>
    <property type="project" value="UniProtKB-UniRule"/>
</dbReference>
<dbReference type="GO" id="GO:0044183">
    <property type="term" value="F:protein folding chaperone"/>
    <property type="evidence" value="ECO:0007669"/>
    <property type="project" value="TreeGrafter"/>
</dbReference>
<dbReference type="GO" id="GO:0043022">
    <property type="term" value="F:ribosome binding"/>
    <property type="evidence" value="ECO:0007669"/>
    <property type="project" value="TreeGrafter"/>
</dbReference>
<dbReference type="GO" id="GO:0051083">
    <property type="term" value="P:'de novo' cotranslational protein folding"/>
    <property type="evidence" value="ECO:0007669"/>
    <property type="project" value="TreeGrafter"/>
</dbReference>
<dbReference type="GO" id="GO:0051301">
    <property type="term" value="P:cell division"/>
    <property type="evidence" value="ECO:0007669"/>
    <property type="project" value="UniProtKB-KW"/>
</dbReference>
<dbReference type="GO" id="GO:0061077">
    <property type="term" value="P:chaperone-mediated protein folding"/>
    <property type="evidence" value="ECO:0007669"/>
    <property type="project" value="TreeGrafter"/>
</dbReference>
<dbReference type="GO" id="GO:0015031">
    <property type="term" value="P:protein transport"/>
    <property type="evidence" value="ECO:0007669"/>
    <property type="project" value="UniProtKB-UniRule"/>
</dbReference>
<dbReference type="GO" id="GO:0043335">
    <property type="term" value="P:protein unfolding"/>
    <property type="evidence" value="ECO:0007669"/>
    <property type="project" value="TreeGrafter"/>
</dbReference>
<dbReference type="FunFam" id="3.10.50.40:FF:000001">
    <property type="entry name" value="Trigger factor"/>
    <property type="match status" value="1"/>
</dbReference>
<dbReference type="FunFam" id="3.30.70.1050:FF:000004">
    <property type="entry name" value="Trigger factor"/>
    <property type="match status" value="1"/>
</dbReference>
<dbReference type="Gene3D" id="3.10.50.40">
    <property type="match status" value="1"/>
</dbReference>
<dbReference type="Gene3D" id="3.30.70.1050">
    <property type="entry name" value="Trigger factor ribosome-binding domain"/>
    <property type="match status" value="1"/>
</dbReference>
<dbReference type="Gene3D" id="1.10.3120.10">
    <property type="entry name" value="Trigger factor, C-terminal domain"/>
    <property type="match status" value="1"/>
</dbReference>
<dbReference type="HAMAP" id="MF_00303">
    <property type="entry name" value="Trigger_factor_Tig"/>
    <property type="match status" value="1"/>
</dbReference>
<dbReference type="InterPro" id="IPR046357">
    <property type="entry name" value="PPIase_dom_sf"/>
</dbReference>
<dbReference type="InterPro" id="IPR001179">
    <property type="entry name" value="PPIase_FKBP_dom"/>
</dbReference>
<dbReference type="InterPro" id="IPR005215">
    <property type="entry name" value="Trig_fac"/>
</dbReference>
<dbReference type="InterPro" id="IPR008880">
    <property type="entry name" value="Trigger_fac_C"/>
</dbReference>
<dbReference type="InterPro" id="IPR037041">
    <property type="entry name" value="Trigger_fac_C_sf"/>
</dbReference>
<dbReference type="InterPro" id="IPR008881">
    <property type="entry name" value="Trigger_fac_ribosome-bd_bac"/>
</dbReference>
<dbReference type="InterPro" id="IPR036611">
    <property type="entry name" value="Trigger_fac_ribosome-bd_sf"/>
</dbReference>
<dbReference type="InterPro" id="IPR027304">
    <property type="entry name" value="Trigger_fact/SurA_dom_sf"/>
</dbReference>
<dbReference type="NCBIfam" id="TIGR00115">
    <property type="entry name" value="tig"/>
    <property type="match status" value="1"/>
</dbReference>
<dbReference type="PANTHER" id="PTHR30560">
    <property type="entry name" value="TRIGGER FACTOR CHAPERONE AND PEPTIDYL-PROLYL CIS/TRANS ISOMERASE"/>
    <property type="match status" value="1"/>
</dbReference>
<dbReference type="PANTHER" id="PTHR30560:SF3">
    <property type="entry name" value="TRIGGER FACTOR-LIKE PROTEIN TIG, CHLOROPLASTIC"/>
    <property type="match status" value="1"/>
</dbReference>
<dbReference type="Pfam" id="PF00254">
    <property type="entry name" value="FKBP_C"/>
    <property type="match status" value="1"/>
</dbReference>
<dbReference type="Pfam" id="PF05698">
    <property type="entry name" value="Trigger_C"/>
    <property type="match status" value="1"/>
</dbReference>
<dbReference type="Pfam" id="PF05697">
    <property type="entry name" value="Trigger_N"/>
    <property type="match status" value="1"/>
</dbReference>
<dbReference type="PIRSF" id="PIRSF003095">
    <property type="entry name" value="Trigger_factor"/>
    <property type="match status" value="1"/>
</dbReference>
<dbReference type="SUPFAM" id="SSF54534">
    <property type="entry name" value="FKBP-like"/>
    <property type="match status" value="1"/>
</dbReference>
<dbReference type="SUPFAM" id="SSF109998">
    <property type="entry name" value="Triger factor/SurA peptide-binding domain-like"/>
    <property type="match status" value="1"/>
</dbReference>
<dbReference type="SUPFAM" id="SSF102735">
    <property type="entry name" value="Trigger factor ribosome-binding domain"/>
    <property type="match status" value="1"/>
</dbReference>
<dbReference type="PROSITE" id="PS50059">
    <property type="entry name" value="FKBP_PPIASE"/>
    <property type="match status" value="1"/>
</dbReference>